<accession>P0C0X6</accession>
<accession>Q02433</accession>
<accession>Q9RFC0</accession>
<organism>
    <name type="scientific">Cereibacter sphaeroides</name>
    <name type="common">Rhodobacter sphaeroides</name>
    <dbReference type="NCBI Taxonomy" id="1063"/>
    <lineage>
        <taxon>Bacteria</taxon>
        <taxon>Pseudomonadati</taxon>
        <taxon>Pseudomonadota</taxon>
        <taxon>Alphaproteobacteria</taxon>
        <taxon>Rhodobacterales</taxon>
        <taxon>Paracoccaceae</taxon>
        <taxon>Cereibacter</taxon>
    </lineage>
</organism>
<gene>
    <name type="primary">bchZ</name>
</gene>
<name>BCHZ_CERSP</name>
<reference key="1">
    <citation type="journal article" date="1991" name="Mol. Microbiol.">
        <title>DNA sequencing and complementation/deletion analysis of the bchA-puf operon region of Rhodobacter sphaeroides: in vivo mapping of the oxygen-regulated puf promoter.</title>
        <authorList>
            <person name="Hunter C.N."/>
            <person name="McGlynn P."/>
            <person name="Ashby M.K."/>
            <person name="Burgess J.G."/>
            <person name="Olsen J.D."/>
        </authorList>
    </citation>
    <scope>NUCLEOTIDE SEQUENCE [GENOMIC DNA]</scope>
    <source>
        <strain>NC13</strain>
    </source>
</reference>
<feature type="chain" id="PRO_0000219851" description="Chlorophyllide reductase subunit Z">
    <location>
        <begin position="1" status="less than"/>
        <end position="408"/>
    </location>
</feature>
<feature type="non-terminal residue">
    <location>
        <position position="1"/>
    </location>
</feature>
<dbReference type="EC" id="1.3.7.15" evidence="1"/>
<dbReference type="PIR" id="S30917">
    <property type="entry name" value="S30917"/>
</dbReference>
<dbReference type="SMR" id="P0C0X6"/>
<dbReference type="UniPathway" id="UPA00669"/>
<dbReference type="GO" id="GO:0016730">
    <property type="term" value="F:oxidoreductase activity, acting on iron-sulfur proteins as donors"/>
    <property type="evidence" value="ECO:0007669"/>
    <property type="project" value="InterPro"/>
</dbReference>
<dbReference type="GO" id="GO:0030494">
    <property type="term" value="P:bacteriochlorophyll biosynthetic process"/>
    <property type="evidence" value="ECO:0007669"/>
    <property type="project" value="UniProtKB-UniPathway"/>
</dbReference>
<dbReference type="GO" id="GO:0015979">
    <property type="term" value="P:photosynthesis"/>
    <property type="evidence" value="ECO:0007669"/>
    <property type="project" value="UniProtKB-KW"/>
</dbReference>
<dbReference type="Gene3D" id="3.40.50.1980">
    <property type="entry name" value="Nitrogenase molybdenum iron protein domain"/>
    <property type="match status" value="2"/>
</dbReference>
<dbReference type="InterPro" id="IPR010244">
    <property type="entry name" value="BchZ"/>
</dbReference>
<dbReference type="InterPro" id="IPR050152">
    <property type="entry name" value="ChlB/BchB/BchZ"/>
</dbReference>
<dbReference type="InterPro" id="IPR013580">
    <property type="entry name" value="LI-POR_suB-like_C"/>
</dbReference>
<dbReference type="InterPro" id="IPR000510">
    <property type="entry name" value="Nase/OxRdtase_comp1"/>
</dbReference>
<dbReference type="NCBIfam" id="TIGR02014">
    <property type="entry name" value="BchZ"/>
    <property type="match status" value="1"/>
</dbReference>
<dbReference type="PANTHER" id="PTHR33712">
    <property type="entry name" value="LIGHT-INDEPENDENT PROTOCHLOROPHYLLIDE REDUCTASE SUBUNIT B"/>
    <property type="match status" value="1"/>
</dbReference>
<dbReference type="PANTHER" id="PTHR33712:SF7">
    <property type="entry name" value="LIGHT-INDEPENDENT PROTOCHLOROPHYLLIDE REDUCTASE SUBUNIT B"/>
    <property type="match status" value="1"/>
</dbReference>
<dbReference type="Pfam" id="PF00148">
    <property type="entry name" value="Oxidored_nitro"/>
    <property type="match status" value="1"/>
</dbReference>
<dbReference type="Pfam" id="PF08369">
    <property type="entry name" value="PCP_red"/>
    <property type="match status" value="1"/>
</dbReference>
<dbReference type="SUPFAM" id="SSF53807">
    <property type="entry name" value="Helical backbone' metal receptor"/>
    <property type="match status" value="1"/>
</dbReference>
<comment type="function">
    <text evidence="1">Converts chlorophylls (Chl) into bacteriochlorophylls (BChl) by reducing ring B of the tetrapyrrole.</text>
</comment>
<comment type="catalytic activity">
    <reaction evidence="1">
        <text>3-deacetyl-3-vinylbacteriochlorophyllide a + 2 oxidized [2Fe-2S]-[ferredoxin] + ADP + phosphate = chlorophyllide a + 2 reduced [2Fe-2S]-[ferredoxin] + ATP + H2O + H(+)</text>
        <dbReference type="Rhea" id="RHEA:37051"/>
        <dbReference type="Rhea" id="RHEA-COMP:10000"/>
        <dbReference type="Rhea" id="RHEA-COMP:10001"/>
        <dbReference type="ChEBI" id="CHEBI:15377"/>
        <dbReference type="ChEBI" id="CHEBI:15378"/>
        <dbReference type="ChEBI" id="CHEBI:30616"/>
        <dbReference type="ChEBI" id="CHEBI:33737"/>
        <dbReference type="ChEBI" id="CHEBI:33738"/>
        <dbReference type="ChEBI" id="CHEBI:43474"/>
        <dbReference type="ChEBI" id="CHEBI:83348"/>
        <dbReference type="ChEBI" id="CHEBI:83373"/>
        <dbReference type="ChEBI" id="CHEBI:456216"/>
        <dbReference type="EC" id="1.3.7.15"/>
    </reaction>
</comment>
<comment type="catalytic activity">
    <reaction evidence="1">
        <text>bacteriochlorophyllide a + 2 oxidized [2Fe-2S]-[ferredoxin] + ADP + phosphate = 3-acetyl-3-devinylchlorophyllide a + 2 reduced [2Fe-2S]-[ferredoxin] + ATP + H2O + H(+)</text>
        <dbReference type="Rhea" id="RHEA:48944"/>
        <dbReference type="Rhea" id="RHEA-COMP:10000"/>
        <dbReference type="Rhea" id="RHEA-COMP:10001"/>
        <dbReference type="ChEBI" id="CHEBI:15377"/>
        <dbReference type="ChEBI" id="CHEBI:15378"/>
        <dbReference type="ChEBI" id="CHEBI:30616"/>
        <dbReference type="ChEBI" id="CHEBI:33737"/>
        <dbReference type="ChEBI" id="CHEBI:33738"/>
        <dbReference type="ChEBI" id="CHEBI:43474"/>
        <dbReference type="ChEBI" id="CHEBI:90794"/>
        <dbReference type="ChEBI" id="CHEBI:90795"/>
        <dbReference type="ChEBI" id="CHEBI:456216"/>
        <dbReference type="EC" id="1.3.7.15"/>
    </reaction>
</comment>
<comment type="catalytic activity">
    <reaction evidence="1">
        <text>3-deacetyl-3-(1-hydroxyethyl)bacteriochlorophyllide a + 2 oxidized [2Fe-2S]-[ferredoxin] + ADP + phosphate = 3-devinyl-3-(1-hydroxyethyl)chlorophyllide a + 2 reduced [2Fe-2S]-[ferredoxin] + ATP + H2O + H(+)</text>
        <dbReference type="Rhea" id="RHEA:48948"/>
        <dbReference type="Rhea" id="RHEA-COMP:10000"/>
        <dbReference type="Rhea" id="RHEA-COMP:10001"/>
        <dbReference type="ChEBI" id="CHEBI:15377"/>
        <dbReference type="ChEBI" id="CHEBI:15378"/>
        <dbReference type="ChEBI" id="CHEBI:30616"/>
        <dbReference type="ChEBI" id="CHEBI:33737"/>
        <dbReference type="ChEBI" id="CHEBI:33738"/>
        <dbReference type="ChEBI" id="CHEBI:43474"/>
        <dbReference type="ChEBI" id="CHEBI:90791"/>
        <dbReference type="ChEBI" id="CHEBI:90792"/>
        <dbReference type="ChEBI" id="CHEBI:456216"/>
        <dbReference type="EC" id="1.3.7.15"/>
    </reaction>
</comment>
<comment type="pathway">
    <text>Porphyrin-containing compound metabolism; bacteriochlorophyll biosynthesis.</text>
</comment>
<comment type="subunit">
    <text evidence="1">Chlorophyllide reductase is composed of three subunits; BchX, BchY and BchZ. Forms a heterodimer of one BchY and one BchZ subunit.</text>
</comment>
<comment type="similarity">
    <text evidence="2">Belongs to the ChlB/BchB/BchZ family.</text>
</comment>
<evidence type="ECO:0000250" key="1">
    <source>
        <dbReference type="UniProtKB" id="P26179"/>
    </source>
</evidence>
<evidence type="ECO:0000305" key="2"/>
<protein>
    <recommendedName>
        <fullName>Chlorophyllide reductase subunit Z</fullName>
        <ecNumber evidence="1">1.3.7.15</ecNumber>
    </recommendedName>
    <alternativeName>
        <fullName>Chlorin reductase subunit Z</fullName>
    </alternativeName>
</protein>
<sequence>DPALPAVVVTGSIAEMIGGGVTPQGTNIQRFLPRTIDEDQWEAADRAMTWIFSEFGMTKGRMPPEAKRPEGAKPRVNILGPMYGVFNMASDLHEIRRLVEGIGAEVNMVMPLGAHLAEMRHLVNADANIVMYREFAGLAEVLGKPYLQAPIGVESTTAFLRRLGEILGLDPEPFIERAPHSTLKPVWDLWRSVTQDFFGTANFGIVATETYARGIRNYLEGDLGLPCAFAVARKRGSKTDNEAVRGLIRQHRPLVLMGSINEKIYLAELKAGHGPQPSFIAASFPGAAIRRATGTPVMGYAGATWLLQEVCNALFDALFHILPLGTQMDSAAATPTTLRRDFPWDADAQAALDRIVEEHPVLTRISAARALRDAAEKAALDAGAERVVRETVEALRGPGFGERKGENQ</sequence>
<proteinExistence type="inferred from homology"/>
<keyword id="KW-0077">Bacteriochlorophyll biosynthesis</keyword>
<keyword id="KW-0149">Chlorophyll biosynthesis</keyword>
<keyword id="KW-0560">Oxidoreductase</keyword>
<keyword id="KW-0602">Photosynthesis</keyword>